<proteinExistence type="inferred from homology"/>
<feature type="chain" id="PRO_1000137348" description="Antiholin-like protein LrgB">
    <location>
        <begin position="1"/>
        <end position="230"/>
    </location>
</feature>
<feature type="transmembrane region" description="Helical" evidence="1">
    <location>
        <begin position="5"/>
        <end position="25"/>
    </location>
</feature>
<feature type="transmembrane region" description="Helical" evidence="1">
    <location>
        <begin position="30"/>
        <end position="50"/>
    </location>
</feature>
<feature type="transmembrane region" description="Helical" evidence="1">
    <location>
        <begin position="61"/>
        <end position="81"/>
    </location>
</feature>
<feature type="transmembrane region" description="Helical" evidence="1">
    <location>
        <begin position="92"/>
        <end position="112"/>
    </location>
</feature>
<feature type="transmembrane region" description="Helical" evidence="1">
    <location>
        <begin position="149"/>
        <end position="169"/>
    </location>
</feature>
<feature type="transmembrane region" description="Helical" evidence="1">
    <location>
        <begin position="177"/>
        <end position="197"/>
    </location>
</feature>
<feature type="transmembrane region" description="Helical" evidence="1">
    <location>
        <begin position="209"/>
        <end position="229"/>
    </location>
</feature>
<sequence length="230" mass="24349">MASTMTPYFGIVVSLIAYGIGTLLFKHSKGFFLFTPLFVAMVLGIVFLKVGNFTFEEYNTGGKMISFFLEPATIAFAIPLYKQVDKLKKYWWQILSAIVVGSICSVIVVFIVAKAIGLDTAVMNSMLPQAATTAIALPISESIGGIPAITSFAVIFNAVIVYALGALFLKTFRVKHPIAKGLALGTAGHALGVAVGIEMGEVEAAMASIAVTVVGVVTVVVIPMFMPFIG</sequence>
<organism>
    <name type="scientific">Bacillus cereus (strain AH820)</name>
    <dbReference type="NCBI Taxonomy" id="405535"/>
    <lineage>
        <taxon>Bacteria</taxon>
        <taxon>Bacillati</taxon>
        <taxon>Bacillota</taxon>
        <taxon>Bacilli</taxon>
        <taxon>Bacillales</taxon>
        <taxon>Bacillaceae</taxon>
        <taxon>Bacillus</taxon>
        <taxon>Bacillus cereus group</taxon>
    </lineage>
</organism>
<gene>
    <name evidence="1" type="primary">lrgB</name>
    <name type="ordered locus">BCAH820_5534</name>
</gene>
<accession>B7JIF5</accession>
<protein>
    <recommendedName>
        <fullName evidence="1">Antiholin-like protein LrgB</fullName>
    </recommendedName>
</protein>
<dbReference type="EMBL" id="CP001283">
    <property type="protein sequence ID" value="ACK87165.1"/>
    <property type="molecule type" value="Genomic_DNA"/>
</dbReference>
<dbReference type="RefSeq" id="WP_000168869.1">
    <property type="nucleotide sequence ID" value="NC_011773.1"/>
</dbReference>
<dbReference type="GeneID" id="93005687"/>
<dbReference type="KEGG" id="bcu:BCAH820_5534"/>
<dbReference type="HOGENOM" id="CLU_082099_1_0_9"/>
<dbReference type="Proteomes" id="UP000001363">
    <property type="component" value="Chromosome"/>
</dbReference>
<dbReference type="GO" id="GO:0005886">
    <property type="term" value="C:plasma membrane"/>
    <property type="evidence" value="ECO:0007669"/>
    <property type="project" value="UniProtKB-SubCell"/>
</dbReference>
<dbReference type="GO" id="GO:0019835">
    <property type="term" value="P:cytolysis"/>
    <property type="evidence" value="ECO:0007669"/>
    <property type="project" value="UniProtKB-UniRule"/>
</dbReference>
<dbReference type="GO" id="GO:0031640">
    <property type="term" value="P:killing of cells of another organism"/>
    <property type="evidence" value="ECO:0007669"/>
    <property type="project" value="UniProtKB-KW"/>
</dbReference>
<dbReference type="GO" id="GO:0012501">
    <property type="term" value="P:programmed cell death"/>
    <property type="evidence" value="ECO:0007669"/>
    <property type="project" value="UniProtKB-UniRule"/>
</dbReference>
<dbReference type="HAMAP" id="MF_01142">
    <property type="entry name" value="LrgB"/>
    <property type="match status" value="1"/>
</dbReference>
<dbReference type="InterPro" id="IPR024891">
    <property type="entry name" value="Antiholin-like_LrgB"/>
</dbReference>
<dbReference type="InterPro" id="IPR007300">
    <property type="entry name" value="CidB/LrgB"/>
</dbReference>
<dbReference type="NCBIfam" id="NF003291">
    <property type="entry name" value="PRK04288.1"/>
    <property type="match status" value="1"/>
</dbReference>
<dbReference type="PANTHER" id="PTHR30249:SF0">
    <property type="entry name" value="PLASTIDAL GLYCOLATE_GLYCERATE TRANSLOCATOR 1, CHLOROPLASTIC"/>
    <property type="match status" value="1"/>
</dbReference>
<dbReference type="PANTHER" id="PTHR30249">
    <property type="entry name" value="PUTATIVE SEROTONIN TRANSPORTER"/>
    <property type="match status" value="1"/>
</dbReference>
<dbReference type="Pfam" id="PF04172">
    <property type="entry name" value="LrgB"/>
    <property type="match status" value="1"/>
</dbReference>
<evidence type="ECO:0000255" key="1">
    <source>
        <dbReference type="HAMAP-Rule" id="MF_01142"/>
    </source>
</evidence>
<comment type="function">
    <text evidence="1">Inhibits the expression or activity of extracellular murein hydrolases by interacting, possibly with LrgA, with the holin-like protein CidA. The LrgAB and CidA proteins may affect the proton motive force of the membrane. May be involved in programmed cell death (PCD), possibly triggering PCD in response to antibiotics and environmental stresses.</text>
</comment>
<comment type="subcellular location">
    <subcellularLocation>
        <location evidence="1">Cell membrane</location>
        <topology evidence="1">Multi-pass membrane protein</topology>
    </subcellularLocation>
</comment>
<comment type="similarity">
    <text evidence="1">Belongs to the CidB/LrgB family. LrgB subfamily.</text>
</comment>
<reference key="1">
    <citation type="submission" date="2008-10" db="EMBL/GenBank/DDBJ databases">
        <title>Genome sequence of Bacillus cereus AH820.</title>
        <authorList>
            <person name="Dodson R.J."/>
            <person name="Durkin A.S."/>
            <person name="Rosovitz M.J."/>
            <person name="Rasko D.A."/>
            <person name="Hoffmaster A."/>
            <person name="Ravel J."/>
            <person name="Sutton G."/>
        </authorList>
    </citation>
    <scope>NUCLEOTIDE SEQUENCE [LARGE SCALE GENOMIC DNA]</scope>
    <source>
        <strain>AH820</strain>
    </source>
</reference>
<name>LRGB_BACC0</name>
<keyword id="KW-1003">Cell membrane</keyword>
<keyword id="KW-0204">Cytolysis</keyword>
<keyword id="KW-0472">Membrane</keyword>
<keyword id="KW-0812">Transmembrane</keyword>
<keyword id="KW-1133">Transmembrane helix</keyword>